<protein>
    <recommendedName>
        <fullName evidence="6">Protein NPGR2</fullName>
    </recommendedName>
    <alternativeName>
        <fullName evidence="6">NO POLLEN GERMINATION RELATED 2</fullName>
    </alternativeName>
</protein>
<feature type="chain" id="PRO_0000438624" description="Protein NPGR2">
    <location>
        <begin position="1"/>
        <end position="739"/>
    </location>
</feature>
<feature type="repeat" description="TPR 1" evidence="1">
    <location>
        <begin position="90"/>
        <end position="127"/>
    </location>
</feature>
<feature type="repeat" description="TPR 2" evidence="1">
    <location>
        <begin position="162"/>
        <end position="195"/>
    </location>
</feature>
<feature type="repeat" description="TPR 3" evidence="1">
    <location>
        <begin position="215"/>
        <end position="248"/>
    </location>
</feature>
<feature type="repeat" description="TPR 4" evidence="2">
    <location>
        <begin position="465"/>
        <end position="498"/>
    </location>
</feature>
<feature type="repeat" description="TPR 5" evidence="1">
    <location>
        <begin position="500"/>
        <end position="533"/>
    </location>
</feature>
<feature type="repeat" description="TPR 6" evidence="1">
    <location>
        <begin position="536"/>
        <end position="569"/>
    </location>
</feature>
<feature type="repeat" description="TPR 7" evidence="2">
    <location>
        <begin position="592"/>
        <end position="625"/>
    </location>
</feature>
<feature type="repeat" description="TPR 8" evidence="2">
    <location>
        <begin position="626"/>
        <end position="659"/>
    </location>
</feature>
<feature type="repeat" description="TPR 9" evidence="1">
    <location>
        <begin position="697"/>
        <end position="733"/>
    </location>
</feature>
<feature type="region of interest" description="Disordered" evidence="3">
    <location>
        <begin position="32"/>
        <end position="71"/>
    </location>
</feature>
<feature type="compositionally biased region" description="Basic and acidic residues" evidence="3">
    <location>
        <begin position="33"/>
        <end position="45"/>
    </location>
</feature>
<feature type="compositionally biased region" description="Polar residues" evidence="3">
    <location>
        <begin position="53"/>
        <end position="63"/>
    </location>
</feature>
<dbReference type="EMBL" id="AL161573">
    <property type="protein sequence ID" value="CAB81448.1"/>
    <property type="status" value="ALT_SEQ"/>
    <property type="molecule type" value="Genomic_DNA"/>
</dbReference>
<dbReference type="EMBL" id="CP002687">
    <property type="protein sequence ID" value="AEE85511.1"/>
    <property type="molecule type" value="Genomic_DNA"/>
</dbReference>
<dbReference type="EMBL" id="CP002687">
    <property type="protein sequence ID" value="ANM67320.1"/>
    <property type="molecule type" value="Genomic_DNA"/>
</dbReference>
<dbReference type="EMBL" id="BT015369">
    <property type="protein sequence ID" value="AAU05492.1"/>
    <property type="molecule type" value="mRNA"/>
</dbReference>
<dbReference type="EMBL" id="BT020340">
    <property type="protein sequence ID" value="AAV85695.1"/>
    <property type="molecule type" value="mRNA"/>
</dbReference>
<dbReference type="PIR" id="T10654">
    <property type="entry name" value="T10654"/>
</dbReference>
<dbReference type="RefSeq" id="NP_001329155.1">
    <property type="nucleotide sequence ID" value="NM_001341925.1"/>
</dbReference>
<dbReference type="RefSeq" id="NP_194589.2">
    <property type="nucleotide sequence ID" value="NM_119002.6"/>
</dbReference>
<dbReference type="SMR" id="Q66GN3"/>
<dbReference type="FunCoup" id="Q66GN3">
    <property type="interactions" value="1752"/>
</dbReference>
<dbReference type="STRING" id="3702.Q66GN3"/>
<dbReference type="iPTMnet" id="Q66GN3"/>
<dbReference type="PaxDb" id="3702-AT4G28600.1"/>
<dbReference type="ProteomicsDB" id="250543"/>
<dbReference type="EnsemblPlants" id="AT4G28600.1">
    <property type="protein sequence ID" value="AT4G28600.1"/>
    <property type="gene ID" value="AT4G28600"/>
</dbReference>
<dbReference type="EnsemblPlants" id="AT4G28600.2">
    <property type="protein sequence ID" value="AT4G28600.2"/>
    <property type="gene ID" value="AT4G28600"/>
</dbReference>
<dbReference type="GeneID" id="828978"/>
<dbReference type="Gramene" id="AT4G28600.1">
    <property type="protein sequence ID" value="AT4G28600.1"/>
    <property type="gene ID" value="AT4G28600"/>
</dbReference>
<dbReference type="Gramene" id="AT4G28600.2">
    <property type="protein sequence ID" value="AT4G28600.2"/>
    <property type="gene ID" value="AT4G28600"/>
</dbReference>
<dbReference type="KEGG" id="ath:AT4G28600"/>
<dbReference type="Araport" id="AT4G28600"/>
<dbReference type="TAIR" id="AT4G28600">
    <property type="gene designation" value="NPGR2"/>
</dbReference>
<dbReference type="eggNOG" id="KOG4162">
    <property type="taxonomic scope" value="Eukaryota"/>
</dbReference>
<dbReference type="HOGENOM" id="CLU_024601_0_0_1"/>
<dbReference type="InParanoid" id="Q66GN3"/>
<dbReference type="PhylomeDB" id="Q66GN3"/>
<dbReference type="PRO" id="PR:Q66GN3"/>
<dbReference type="Proteomes" id="UP000006548">
    <property type="component" value="Chromosome 4"/>
</dbReference>
<dbReference type="ExpressionAtlas" id="Q66GN3">
    <property type="expression patterns" value="baseline and differential"/>
</dbReference>
<dbReference type="GO" id="GO:0031234">
    <property type="term" value="C:extrinsic component of cytoplasmic side of plasma membrane"/>
    <property type="evidence" value="ECO:0000314"/>
    <property type="project" value="TAIR"/>
</dbReference>
<dbReference type="GO" id="GO:0098857">
    <property type="term" value="C:membrane microdomain"/>
    <property type="evidence" value="ECO:0000314"/>
    <property type="project" value="TAIR"/>
</dbReference>
<dbReference type="GO" id="GO:0005886">
    <property type="term" value="C:plasma membrane"/>
    <property type="evidence" value="ECO:0000314"/>
    <property type="project" value="TAIR"/>
</dbReference>
<dbReference type="GO" id="GO:0005516">
    <property type="term" value="F:calmodulin binding"/>
    <property type="evidence" value="ECO:0000304"/>
    <property type="project" value="TAIR"/>
</dbReference>
<dbReference type="Gene3D" id="1.25.40.10">
    <property type="entry name" value="Tetratricopeptide repeat domain"/>
    <property type="match status" value="3"/>
</dbReference>
<dbReference type="InterPro" id="IPR043376">
    <property type="entry name" value="NPG1-like"/>
</dbReference>
<dbReference type="InterPro" id="IPR011990">
    <property type="entry name" value="TPR-like_helical_dom_sf"/>
</dbReference>
<dbReference type="InterPro" id="IPR019734">
    <property type="entry name" value="TPR_rpt"/>
</dbReference>
<dbReference type="PANTHER" id="PTHR44102">
    <property type="entry name" value="PROTEIN NPG1"/>
    <property type="match status" value="1"/>
</dbReference>
<dbReference type="PANTHER" id="PTHR44102:SF12">
    <property type="entry name" value="PROTEIN NPGR2"/>
    <property type="match status" value="1"/>
</dbReference>
<dbReference type="Pfam" id="PF13432">
    <property type="entry name" value="TPR_16"/>
    <property type="match status" value="1"/>
</dbReference>
<dbReference type="Pfam" id="PF14559">
    <property type="entry name" value="TPR_19"/>
    <property type="match status" value="1"/>
</dbReference>
<dbReference type="Pfam" id="PF13181">
    <property type="entry name" value="TPR_8"/>
    <property type="match status" value="1"/>
</dbReference>
<dbReference type="SMART" id="SM00028">
    <property type="entry name" value="TPR"/>
    <property type="match status" value="7"/>
</dbReference>
<dbReference type="SUPFAM" id="SSF48452">
    <property type="entry name" value="TPR-like"/>
    <property type="match status" value="2"/>
</dbReference>
<dbReference type="PROSITE" id="PS50005">
    <property type="entry name" value="TPR"/>
    <property type="match status" value="3"/>
</dbReference>
<dbReference type="PROSITE" id="PS50293">
    <property type="entry name" value="TPR_REGION"/>
    <property type="match status" value="2"/>
</dbReference>
<reference key="1">
    <citation type="journal article" date="2003" name="Proc. Natl. Acad. Sci. U.S.A.">
        <title>A calmodulin-binding protein from Arabidopsis has an essential role in pollen germination.</title>
        <authorList>
            <person name="Golovkin M."/>
            <person name="Reddy A."/>
        </authorList>
    </citation>
    <scope>NUCLEOTIDE SEQUENCE [MRNA]</scope>
    <scope>GENE FAMILY</scope>
    <scope>NOMENCLATURE</scope>
    <scope>INTERACTION WITH CALMODULIN</scope>
    <scope>TISSUE SPECIFICITY</scope>
</reference>
<reference key="2">
    <citation type="journal article" date="1999" name="Nature">
        <title>Sequence and analysis of chromosome 4 of the plant Arabidopsis thaliana.</title>
        <authorList>
            <person name="Mayer K.F.X."/>
            <person name="Schueller C."/>
            <person name="Wambutt R."/>
            <person name="Murphy G."/>
            <person name="Volckaert G."/>
            <person name="Pohl T."/>
            <person name="Duesterhoeft A."/>
            <person name="Stiekema W."/>
            <person name="Entian K.-D."/>
            <person name="Terryn N."/>
            <person name="Harris B."/>
            <person name="Ansorge W."/>
            <person name="Brandt P."/>
            <person name="Grivell L.A."/>
            <person name="Rieger M."/>
            <person name="Weichselgartner M."/>
            <person name="de Simone V."/>
            <person name="Obermaier B."/>
            <person name="Mache R."/>
            <person name="Mueller M."/>
            <person name="Kreis M."/>
            <person name="Delseny M."/>
            <person name="Puigdomenech P."/>
            <person name="Watson M."/>
            <person name="Schmidtheini T."/>
            <person name="Reichert B."/>
            <person name="Portetelle D."/>
            <person name="Perez-Alonso M."/>
            <person name="Boutry M."/>
            <person name="Bancroft I."/>
            <person name="Vos P."/>
            <person name="Hoheisel J."/>
            <person name="Zimmermann W."/>
            <person name="Wedler H."/>
            <person name="Ridley P."/>
            <person name="Langham S.-A."/>
            <person name="McCullagh B."/>
            <person name="Bilham L."/>
            <person name="Robben J."/>
            <person name="van der Schueren J."/>
            <person name="Grymonprez B."/>
            <person name="Chuang Y.-J."/>
            <person name="Vandenbussche F."/>
            <person name="Braeken M."/>
            <person name="Weltjens I."/>
            <person name="Voet M."/>
            <person name="Bastiaens I."/>
            <person name="Aert R."/>
            <person name="Defoor E."/>
            <person name="Weitzenegger T."/>
            <person name="Bothe G."/>
            <person name="Ramsperger U."/>
            <person name="Hilbert H."/>
            <person name="Braun M."/>
            <person name="Holzer E."/>
            <person name="Brandt A."/>
            <person name="Peters S."/>
            <person name="van Staveren M."/>
            <person name="Dirkse W."/>
            <person name="Mooijman P."/>
            <person name="Klein Lankhorst R."/>
            <person name="Rose M."/>
            <person name="Hauf J."/>
            <person name="Koetter P."/>
            <person name="Berneiser S."/>
            <person name="Hempel S."/>
            <person name="Feldpausch M."/>
            <person name="Lamberth S."/>
            <person name="Van den Daele H."/>
            <person name="De Keyser A."/>
            <person name="Buysshaert C."/>
            <person name="Gielen J."/>
            <person name="Villarroel R."/>
            <person name="De Clercq R."/>
            <person name="van Montagu M."/>
            <person name="Rogers J."/>
            <person name="Cronin A."/>
            <person name="Quail M.A."/>
            <person name="Bray-Allen S."/>
            <person name="Clark L."/>
            <person name="Doggett J."/>
            <person name="Hall S."/>
            <person name="Kay M."/>
            <person name="Lennard N."/>
            <person name="McLay K."/>
            <person name="Mayes R."/>
            <person name="Pettett A."/>
            <person name="Rajandream M.A."/>
            <person name="Lyne M."/>
            <person name="Benes V."/>
            <person name="Rechmann S."/>
            <person name="Borkova D."/>
            <person name="Bloecker H."/>
            <person name="Scharfe M."/>
            <person name="Grimm M."/>
            <person name="Loehnert T.-H."/>
            <person name="Dose S."/>
            <person name="de Haan M."/>
            <person name="Maarse A.C."/>
            <person name="Schaefer M."/>
            <person name="Mueller-Auer S."/>
            <person name="Gabel C."/>
            <person name="Fuchs M."/>
            <person name="Fartmann B."/>
            <person name="Granderath K."/>
            <person name="Dauner D."/>
            <person name="Herzl A."/>
            <person name="Neumann S."/>
            <person name="Argiriou A."/>
            <person name="Vitale D."/>
            <person name="Liguori R."/>
            <person name="Piravandi E."/>
            <person name="Massenet O."/>
            <person name="Quigley F."/>
            <person name="Clabauld G."/>
            <person name="Muendlein A."/>
            <person name="Felber R."/>
            <person name="Schnabl S."/>
            <person name="Hiller R."/>
            <person name="Schmidt W."/>
            <person name="Lecharny A."/>
            <person name="Aubourg S."/>
            <person name="Chefdor F."/>
            <person name="Cooke R."/>
            <person name="Berger C."/>
            <person name="Monfort A."/>
            <person name="Casacuberta E."/>
            <person name="Gibbons T."/>
            <person name="Weber N."/>
            <person name="Vandenbol M."/>
            <person name="Bargues M."/>
            <person name="Terol J."/>
            <person name="Torres A."/>
            <person name="Perez-Perez A."/>
            <person name="Purnelle B."/>
            <person name="Bent E."/>
            <person name="Johnson S."/>
            <person name="Tacon D."/>
            <person name="Jesse T."/>
            <person name="Heijnen L."/>
            <person name="Schwarz S."/>
            <person name="Scholler P."/>
            <person name="Heber S."/>
            <person name="Francs P."/>
            <person name="Bielke C."/>
            <person name="Frishman D."/>
            <person name="Haase D."/>
            <person name="Lemcke K."/>
            <person name="Mewes H.-W."/>
            <person name="Stocker S."/>
            <person name="Zaccaria P."/>
            <person name="Bevan M."/>
            <person name="Wilson R.K."/>
            <person name="de la Bastide M."/>
            <person name="Habermann K."/>
            <person name="Parnell L."/>
            <person name="Dedhia N."/>
            <person name="Gnoj L."/>
            <person name="Schutz K."/>
            <person name="Huang E."/>
            <person name="Spiegel L."/>
            <person name="Sekhon M."/>
            <person name="Murray J."/>
            <person name="Sheet P."/>
            <person name="Cordes M."/>
            <person name="Abu-Threideh J."/>
            <person name="Stoneking T."/>
            <person name="Kalicki J."/>
            <person name="Graves T."/>
            <person name="Harmon G."/>
            <person name="Edwards J."/>
            <person name="Latreille P."/>
            <person name="Courtney L."/>
            <person name="Cloud J."/>
            <person name="Abbott A."/>
            <person name="Scott K."/>
            <person name="Johnson D."/>
            <person name="Minx P."/>
            <person name="Bentley D."/>
            <person name="Fulton B."/>
            <person name="Miller N."/>
            <person name="Greco T."/>
            <person name="Kemp K."/>
            <person name="Kramer J."/>
            <person name="Fulton L."/>
            <person name="Mardis E."/>
            <person name="Dante M."/>
            <person name="Pepin K."/>
            <person name="Hillier L.W."/>
            <person name="Nelson J."/>
            <person name="Spieth J."/>
            <person name="Ryan E."/>
            <person name="Andrews S."/>
            <person name="Geisel C."/>
            <person name="Layman D."/>
            <person name="Du H."/>
            <person name="Ali J."/>
            <person name="Berghoff A."/>
            <person name="Jones K."/>
            <person name="Drone K."/>
            <person name="Cotton M."/>
            <person name="Joshu C."/>
            <person name="Antonoiu B."/>
            <person name="Zidanic M."/>
            <person name="Strong C."/>
            <person name="Sun H."/>
            <person name="Lamar B."/>
            <person name="Yordan C."/>
            <person name="Ma P."/>
            <person name="Zhong J."/>
            <person name="Preston R."/>
            <person name="Vil D."/>
            <person name="Shekher M."/>
            <person name="Matero A."/>
            <person name="Shah R."/>
            <person name="Swaby I.K."/>
            <person name="O'Shaughnessy A."/>
            <person name="Rodriguez M."/>
            <person name="Hoffman J."/>
            <person name="Till S."/>
            <person name="Granat S."/>
            <person name="Shohdy N."/>
            <person name="Hasegawa A."/>
            <person name="Hameed A."/>
            <person name="Lodhi M."/>
            <person name="Johnson A."/>
            <person name="Chen E."/>
            <person name="Marra M.A."/>
            <person name="Martienssen R."/>
            <person name="McCombie W.R."/>
        </authorList>
    </citation>
    <scope>NUCLEOTIDE SEQUENCE [LARGE SCALE GENOMIC DNA]</scope>
    <source>
        <strain>cv. Columbia</strain>
    </source>
</reference>
<reference key="3">
    <citation type="journal article" date="2017" name="Plant J.">
        <title>Araport11: a complete reannotation of the Arabidopsis thaliana reference genome.</title>
        <authorList>
            <person name="Cheng C.Y."/>
            <person name="Krishnakumar V."/>
            <person name="Chan A.P."/>
            <person name="Thibaud-Nissen F."/>
            <person name="Schobel S."/>
            <person name="Town C.D."/>
        </authorList>
    </citation>
    <scope>GENOME REANNOTATION</scope>
    <source>
        <strain>cv. Columbia</strain>
    </source>
</reference>
<reference key="4">
    <citation type="submission" date="2004-12" db="EMBL/GenBank/DDBJ databases">
        <title>Arabidopsis ORF clones.</title>
        <authorList>
            <person name="Cheuk R."/>
            <person name="Chen H."/>
            <person name="Kim C.J."/>
            <person name="Shinn P."/>
            <person name="Ecker J.R."/>
        </authorList>
    </citation>
    <scope>NUCLEOTIDE SEQUENCE [LARGE SCALE MRNA]</scope>
    <source>
        <strain>cv. Columbia</strain>
    </source>
</reference>
<reference key="5">
    <citation type="journal article" date="2002" name="J. Biol. Chem.">
        <title>Genes encoding calmodulin-binding proteins in the Arabidopsis genome.</title>
        <authorList>
            <person name="Reddy V.S."/>
            <person name="Ali G.S."/>
            <person name="Reddy A.S.N."/>
        </authorList>
    </citation>
    <scope>INTERACTION WITH CALMODULIN</scope>
</reference>
<comment type="subunit">
    <text evidence="4 5">Interacts with calmodulin in a calcium-dependent manner.</text>
</comment>
<comment type="tissue specificity">
    <text evidence="5">Expressed in pollen, flowers and fruits.</text>
</comment>
<comment type="sequence caution" evidence="7">
    <conflict type="erroneous gene model prediction">
        <sequence resource="EMBL-CDS" id="CAB81448"/>
    </conflict>
</comment>
<comment type="sequence caution" evidence="7">
    <conflict type="erroneous initiation">
        <sequence resource="EMBL-CDS" id="CAB81448"/>
    </conflict>
    <text>Truncated N-terminus.</text>
</comment>
<name>NPGR2_ARATH</name>
<gene>
    <name evidence="6" type="primary">NPGR2</name>
    <name evidence="8" type="ordered locus">At4g28600</name>
    <name evidence="10" type="ORF">T5F17.50</name>
</gene>
<organism evidence="9">
    <name type="scientific">Arabidopsis thaliana</name>
    <name type="common">Mouse-ear cress</name>
    <dbReference type="NCBI Taxonomy" id="3702"/>
    <lineage>
        <taxon>Eukaryota</taxon>
        <taxon>Viridiplantae</taxon>
        <taxon>Streptophyta</taxon>
        <taxon>Embryophyta</taxon>
        <taxon>Tracheophyta</taxon>
        <taxon>Spermatophyta</taxon>
        <taxon>Magnoliopsida</taxon>
        <taxon>eudicotyledons</taxon>
        <taxon>Gunneridae</taxon>
        <taxon>Pentapetalae</taxon>
        <taxon>rosids</taxon>
        <taxon>malvids</taxon>
        <taxon>Brassicales</taxon>
        <taxon>Brassicaceae</taxon>
        <taxon>Camelineae</taxon>
        <taxon>Arabidopsis</taxon>
    </lineage>
</organism>
<keyword id="KW-0112">Calmodulin-binding</keyword>
<keyword id="KW-1185">Reference proteome</keyword>
<keyword id="KW-0677">Repeat</keyword>
<keyword id="KW-0802">TPR repeat</keyword>
<evidence type="ECO:0000255" key="1"/>
<evidence type="ECO:0000255" key="2">
    <source>
        <dbReference type="PROSITE-ProRule" id="PRU00339"/>
    </source>
</evidence>
<evidence type="ECO:0000256" key="3">
    <source>
        <dbReference type="SAM" id="MobiDB-lite"/>
    </source>
</evidence>
<evidence type="ECO:0000269" key="4">
    <source>
    </source>
</evidence>
<evidence type="ECO:0000269" key="5">
    <source>
    </source>
</evidence>
<evidence type="ECO:0000303" key="6">
    <source>
    </source>
</evidence>
<evidence type="ECO:0000305" key="7"/>
<evidence type="ECO:0000312" key="8">
    <source>
        <dbReference type="Araport" id="AT4G28600"/>
    </source>
</evidence>
<evidence type="ECO:0000312" key="9">
    <source>
        <dbReference type="EMBL" id="AAU05492.1"/>
    </source>
</evidence>
<evidence type="ECO:0000312" key="10">
    <source>
        <dbReference type="EMBL" id="CAB81448.1"/>
    </source>
</evidence>
<sequence>MKNSEIRPEKLHLRKLRKSLRKIRMKCLCSGEQMRHREEEDKKSEVGVGRDYNGSSALSTAESENAKKLDNGNIEEAELSLRETSSLNYEEARALLGRIEYQKGNIEAALRVFEGIDINGITVKMKTALTVREDRKHRRRSKGGFSTAPSPAMSKHAVSLLFEAIFLKAKSLQRLGRFQEAAESCRVILDIVETSLAEGASDNVTGDIKLQETLTKAVELLPELWKLADSPRDAILSYRRALLNHWKLDPETTARIQKEYAVFLLYSGEEAVPPNLRSQTEGSFIPRNNVEEAILLLMLLLRKVNLKRISWDAAILDHLSFALTIAGDLTALAKQFEELSPELLDQRELYHTLSLCYQGAGEGLVALGLLRKLFSEREDPNRTSGLLMASKICGERSGLAEEGLDYARKAIGNLGKECSQLDGAARFVLGITLTESSRMAVTETERIARQSEGIQALESADMTNPRVVHRLALENAEQRKLDSALAYAKEALKLGAESDLEVWLLLARVLSAQKRFSDAETIVDAALNETGKWEQGKLLRLKAKLRLAKGEVKDAIKTYTQLLALLQVQSKSFNSAKKLPKGYVKELMSLELGTWHDLAHIYINLSQWRDAESCLSRSRLIAPYSSVRYHIEGVLYNRRGQLEEAMEAFTTALDIDPMHVPSLTSKAEILLEVGNRSGIAVVRSFLMEALRIDRLNHSAWYNLGKMFKAEGSVSSMQEAVECFQAAVTLEETMPVEPFR</sequence>
<accession>Q66GN3</accession>
<accession>Q9M0H1</accession>
<proteinExistence type="evidence at protein level"/>